<dbReference type="EMBL" id="DQ238553">
    <property type="protein sequence ID" value="ABB83546.1"/>
    <property type="molecule type" value="Genomic_DNA"/>
</dbReference>
<dbReference type="SMR" id="Q2Q1P0"/>
<dbReference type="GlyCosmos" id="Q2Q1P0">
    <property type="glycosylation" value="2 sites, No reported glycans"/>
</dbReference>
<dbReference type="GO" id="GO:0005737">
    <property type="term" value="C:cytoplasm"/>
    <property type="evidence" value="ECO:0007669"/>
    <property type="project" value="TreeGrafter"/>
</dbReference>
<dbReference type="GO" id="GO:0005615">
    <property type="term" value="C:extracellular space"/>
    <property type="evidence" value="ECO:0007669"/>
    <property type="project" value="TreeGrafter"/>
</dbReference>
<dbReference type="GO" id="GO:0005179">
    <property type="term" value="F:hormone activity"/>
    <property type="evidence" value="ECO:0007669"/>
    <property type="project" value="UniProtKB-KW"/>
</dbReference>
<dbReference type="GO" id="GO:0007186">
    <property type="term" value="P:G protein-coupled receptor signaling pathway"/>
    <property type="evidence" value="ECO:0007669"/>
    <property type="project" value="TreeGrafter"/>
</dbReference>
<dbReference type="CDD" id="cd00069">
    <property type="entry name" value="GHB_like"/>
    <property type="match status" value="1"/>
</dbReference>
<dbReference type="FunFam" id="2.10.90.10:FF:000007">
    <property type="entry name" value="Luteinizing hormone beta subunit"/>
    <property type="match status" value="1"/>
</dbReference>
<dbReference type="Gene3D" id="2.10.90.10">
    <property type="entry name" value="Cystine-knot cytokines"/>
    <property type="match status" value="1"/>
</dbReference>
<dbReference type="InterPro" id="IPR029034">
    <property type="entry name" value="Cystine-knot_cytokine"/>
</dbReference>
<dbReference type="InterPro" id="IPR006208">
    <property type="entry name" value="Glyco_hormone_CN"/>
</dbReference>
<dbReference type="InterPro" id="IPR001545">
    <property type="entry name" value="Gonadotropin_bsu"/>
</dbReference>
<dbReference type="InterPro" id="IPR018245">
    <property type="entry name" value="Gonadotropin_bsu_CS"/>
</dbReference>
<dbReference type="PANTHER" id="PTHR11515:SF25">
    <property type="entry name" value="CHORIOGONADOTROPIN SUBUNIT BETA 3-RELATED"/>
    <property type="match status" value="1"/>
</dbReference>
<dbReference type="PANTHER" id="PTHR11515">
    <property type="entry name" value="GLYCOPROTEIN HORMONE BETA CHAIN"/>
    <property type="match status" value="1"/>
</dbReference>
<dbReference type="Pfam" id="PF00007">
    <property type="entry name" value="Cys_knot"/>
    <property type="match status" value="1"/>
</dbReference>
<dbReference type="SMART" id="SM00068">
    <property type="entry name" value="GHB"/>
    <property type="match status" value="1"/>
</dbReference>
<dbReference type="SUPFAM" id="SSF57501">
    <property type="entry name" value="Cystine-knot cytokines"/>
    <property type="match status" value="1"/>
</dbReference>
<dbReference type="PROSITE" id="PS00261">
    <property type="entry name" value="GLYCO_HORMONE_BETA_1"/>
    <property type="match status" value="1"/>
</dbReference>
<dbReference type="PROSITE" id="PS00689">
    <property type="entry name" value="GLYCO_HORMONE_BETA_2"/>
    <property type="match status" value="1"/>
</dbReference>
<proteinExistence type="inferred from homology"/>
<reference key="1">
    <citation type="submission" date="2005-10" db="EMBL/GenBank/DDBJ databases">
        <title>What is the evidence for the functionality of CGB1 and CGB2?</title>
        <authorList>
            <person name="Hallast P."/>
            <person name="Rull K."/>
            <person name="Laan M."/>
        </authorList>
    </citation>
    <scope>NUCLEOTIDE SEQUENCE [GENOMIC DNA]</scope>
</reference>
<keyword id="KW-1015">Disulfide bond</keyword>
<keyword id="KW-0325">Glycoprotein</keyword>
<keyword id="KW-0372">Hormone</keyword>
<keyword id="KW-0964">Secreted</keyword>
<keyword id="KW-0732">Signal</keyword>
<gene>
    <name type="primary">LHB</name>
</gene>
<name>LSHB_PONPY</name>
<organism>
    <name type="scientific">Pongo pygmaeus</name>
    <name type="common">Bornean orangutan</name>
    <dbReference type="NCBI Taxonomy" id="9600"/>
    <lineage>
        <taxon>Eukaryota</taxon>
        <taxon>Metazoa</taxon>
        <taxon>Chordata</taxon>
        <taxon>Craniata</taxon>
        <taxon>Vertebrata</taxon>
        <taxon>Euteleostomi</taxon>
        <taxon>Mammalia</taxon>
        <taxon>Eutheria</taxon>
        <taxon>Euarchontoglires</taxon>
        <taxon>Primates</taxon>
        <taxon>Haplorrhini</taxon>
        <taxon>Catarrhini</taxon>
        <taxon>Hominidae</taxon>
        <taxon>Pongo</taxon>
    </lineage>
</organism>
<comment type="function">
    <text evidence="1">Promotes spermatogenesis and ovulation by stimulating the testes and ovaries to synthesize steroids.</text>
</comment>
<comment type="subunit">
    <text evidence="1">Heterodimer of a common alpha chain and a unique beta chain which confers biological specificity to thyrotropin, lutropin, follitropin and gonadotropin.</text>
</comment>
<comment type="subcellular location">
    <subcellularLocation>
        <location>Secreted</location>
    </subcellularLocation>
</comment>
<comment type="similarity">
    <text evidence="3">Belongs to the glycoprotein hormones subunit beta family.</text>
</comment>
<evidence type="ECO:0000250" key="1"/>
<evidence type="ECO:0000255" key="2"/>
<evidence type="ECO:0000305" key="3"/>
<sequence>MEMLQGLLLLMLLSMGGTWASKEPLRPRCRPINATLAVEKEGCPVCITVNTTICAGYCPTMTRVLQSVLPPLPQVVCTYRDVRFESIWLPGCPRGVDPVVSYAVALSCHCGLCRRSTSDCGGPKDHPLTCDHPQLPGLLFL</sequence>
<protein>
    <recommendedName>
        <fullName>Lutropin subunit beta</fullName>
        <shortName>Lutropin beta chain</shortName>
    </recommendedName>
    <alternativeName>
        <fullName>Luteinizing hormone subunit beta</fullName>
        <shortName>LH-B</shortName>
        <shortName>LSH-B</shortName>
        <shortName>LSH-beta</shortName>
    </alternativeName>
</protein>
<feature type="signal peptide" evidence="1">
    <location>
        <begin position="1"/>
        <end position="20"/>
    </location>
</feature>
<feature type="chain" id="PRO_0000226052" description="Lutropin subunit beta">
    <location>
        <begin position="21"/>
        <end position="141"/>
    </location>
</feature>
<feature type="glycosylation site" description="N-linked (GlcNAc...) asparagine" evidence="2">
    <location>
        <position position="33"/>
    </location>
</feature>
<feature type="glycosylation site" description="N-linked (GlcNAc...) asparagine" evidence="2">
    <location>
        <position position="50"/>
    </location>
</feature>
<feature type="disulfide bond" evidence="1">
    <location>
        <begin position="29"/>
        <end position="77"/>
    </location>
</feature>
<feature type="disulfide bond" evidence="1">
    <location>
        <begin position="43"/>
        <end position="92"/>
    </location>
</feature>
<feature type="disulfide bond" evidence="1">
    <location>
        <begin position="46"/>
        <end position="130"/>
    </location>
</feature>
<feature type="disulfide bond" evidence="1">
    <location>
        <begin position="54"/>
        <end position="108"/>
    </location>
</feature>
<feature type="disulfide bond" evidence="1">
    <location>
        <begin position="58"/>
        <end position="110"/>
    </location>
</feature>
<feature type="disulfide bond" evidence="1">
    <location>
        <begin position="113"/>
        <end position="120"/>
    </location>
</feature>
<accession>Q2Q1P0</accession>